<evidence type="ECO:0000255" key="1">
    <source>
        <dbReference type="PROSITE-ProRule" id="PRU00805"/>
    </source>
</evidence>
<evidence type="ECO:0000269" key="2">
    <source>
    </source>
</evidence>
<evidence type="ECO:0000269" key="3">
    <source>
    </source>
</evidence>
<evidence type="ECO:0000269" key="4">
    <source>
    </source>
</evidence>
<evidence type="ECO:0000269" key="5">
    <source>
    </source>
</evidence>
<evidence type="ECO:0000269" key="6">
    <source>
    </source>
</evidence>
<evidence type="ECO:0000269" key="7">
    <source>
    </source>
</evidence>
<evidence type="ECO:0000303" key="8">
    <source>
    </source>
</evidence>
<evidence type="ECO:0000303" key="9">
    <source>
    </source>
</evidence>
<evidence type="ECO:0000305" key="10"/>
<evidence type="ECO:0000305" key="11">
    <source>
    </source>
</evidence>
<evidence type="ECO:0000305" key="12">
    <source>
    </source>
</evidence>
<evidence type="ECO:0000312" key="13">
    <source>
        <dbReference type="EMBL" id="RZC49697.1"/>
    </source>
</evidence>
<evidence type="ECO:0007744" key="14">
    <source>
        <dbReference type="PDB" id="5O9W"/>
    </source>
</evidence>
<evidence type="ECO:0007829" key="15">
    <source>
        <dbReference type="PDB" id="5O9W"/>
    </source>
</evidence>
<feature type="chain" id="PRO_0000401477" description="Thebaine 6-O-demethylase">
    <location>
        <begin position="1"/>
        <end position="364"/>
    </location>
</feature>
<feature type="domain" description="Fe2OG dioxygenase" evidence="1">
    <location>
        <begin position="214"/>
        <end position="314"/>
    </location>
</feature>
<feature type="binding site" evidence="5 14">
    <location>
        <position position="223"/>
    </location>
    <ligand>
        <name>2-oxoglutarate</name>
        <dbReference type="ChEBI" id="CHEBI:16810"/>
    </ligand>
</feature>
<feature type="binding site" evidence="1">
    <location>
        <position position="238"/>
    </location>
    <ligand>
        <name>Fe cation</name>
        <dbReference type="ChEBI" id="CHEBI:24875"/>
    </ligand>
</feature>
<feature type="binding site" evidence="1">
    <location>
        <position position="240"/>
    </location>
    <ligand>
        <name>Fe cation</name>
        <dbReference type="ChEBI" id="CHEBI:24875"/>
    </ligand>
</feature>
<feature type="binding site" evidence="1">
    <location>
        <position position="295"/>
    </location>
    <ligand>
        <name>Fe cation</name>
        <dbReference type="ChEBI" id="CHEBI:24875"/>
    </ligand>
</feature>
<feature type="binding site" evidence="1 5 14">
    <location>
        <position position="305"/>
    </location>
    <ligand>
        <name>2-oxoglutarate</name>
        <dbReference type="ChEBI" id="CHEBI:16810"/>
    </ligand>
</feature>
<feature type="binding site" evidence="5 14">
    <location>
        <position position="307"/>
    </location>
    <ligand>
        <name>2-oxoglutarate</name>
        <dbReference type="ChEBI" id="CHEBI:16810"/>
    </ligand>
</feature>
<feature type="sequence conflict" description="In Ref. 1; ADD85329." evidence="10" ref="1">
    <original>A</original>
    <variation>S</variation>
    <location>
        <position position="266"/>
    </location>
</feature>
<feature type="helix" evidence="15">
    <location>
        <begin position="1"/>
        <end position="7"/>
    </location>
</feature>
<feature type="helix" evidence="15">
    <location>
        <begin position="18"/>
        <end position="22"/>
    </location>
</feature>
<feature type="helix" evidence="15">
    <location>
        <begin position="31"/>
        <end position="33"/>
    </location>
</feature>
<feature type="strand" evidence="15">
    <location>
        <begin position="57"/>
        <end position="59"/>
    </location>
</feature>
<feature type="helix" evidence="15">
    <location>
        <begin position="60"/>
        <end position="63"/>
    </location>
</feature>
<feature type="helix" evidence="15">
    <location>
        <begin position="68"/>
        <end position="84"/>
    </location>
</feature>
<feature type="strand" evidence="15">
    <location>
        <begin position="86"/>
        <end position="92"/>
    </location>
</feature>
<feature type="helix" evidence="15">
    <location>
        <begin position="97"/>
        <end position="111"/>
    </location>
</feature>
<feature type="helix" evidence="15">
    <location>
        <begin position="115"/>
        <end position="118"/>
    </location>
</feature>
<feature type="strand" evidence="15">
    <location>
        <begin position="147"/>
        <end position="155"/>
    </location>
</feature>
<feature type="helix" evidence="15">
    <location>
        <begin position="156"/>
        <end position="158"/>
    </location>
</feature>
<feature type="helix" evidence="15">
    <location>
        <begin position="161"/>
        <end position="166"/>
    </location>
</feature>
<feature type="helix" evidence="15">
    <location>
        <begin position="169"/>
        <end position="196"/>
    </location>
</feature>
<feature type="turn" evidence="15">
    <location>
        <begin position="201"/>
        <end position="203"/>
    </location>
</feature>
<feature type="helix" evidence="15">
    <location>
        <begin position="208"/>
        <end position="211"/>
    </location>
</feature>
<feature type="strand" evidence="15">
    <location>
        <begin position="215"/>
        <end position="223"/>
    </location>
</feature>
<feature type="turn" evidence="15">
    <location>
        <begin position="229"/>
        <end position="231"/>
    </location>
</feature>
<feature type="strand" evidence="15">
    <location>
        <begin position="234"/>
        <end position="238"/>
    </location>
</feature>
<feature type="strand" evidence="15">
    <location>
        <begin position="242"/>
        <end position="249"/>
    </location>
</feature>
<feature type="strand" evidence="15">
    <location>
        <begin position="256"/>
        <end position="260"/>
    </location>
</feature>
<feature type="strand" evidence="15">
    <location>
        <begin position="263"/>
        <end position="266"/>
    </location>
</feature>
<feature type="strand" evidence="15">
    <location>
        <begin position="274"/>
        <end position="278"/>
    </location>
</feature>
<feature type="helix" evidence="15">
    <location>
        <begin position="280"/>
        <end position="285"/>
    </location>
</feature>
<feature type="turn" evidence="15">
    <location>
        <begin position="286"/>
        <end position="288"/>
    </location>
</feature>
<feature type="strand" evidence="15">
    <location>
        <begin position="295"/>
        <end position="297"/>
    </location>
</feature>
<feature type="strand" evidence="15">
    <location>
        <begin position="305"/>
        <end position="313"/>
    </location>
</feature>
<feature type="helix" evidence="15">
    <location>
        <begin position="324"/>
        <end position="326"/>
    </location>
</feature>
<feature type="strand" evidence="15">
    <location>
        <begin position="329"/>
        <end position="331"/>
    </location>
</feature>
<feature type="helix" evidence="15">
    <location>
        <begin position="341"/>
        <end position="349"/>
    </location>
</feature>
<feature type="strand" evidence="15">
    <location>
        <begin position="353"/>
        <end position="355"/>
    </location>
</feature>
<feature type="helix" evidence="15">
    <location>
        <begin position="358"/>
        <end position="361"/>
    </location>
</feature>
<dbReference type="EC" id="1.14.11.31" evidence="2"/>
<dbReference type="EC" id="2.1.1.-" evidence="4"/>
<dbReference type="EMBL" id="GQ500139">
    <property type="protein sequence ID" value="ADD85329.1"/>
    <property type="molecule type" value="mRNA"/>
</dbReference>
<dbReference type="EMBL" id="CM010716">
    <property type="protein sequence ID" value="RZC49697.1"/>
    <property type="molecule type" value="Genomic_DNA"/>
</dbReference>
<dbReference type="PDB" id="5O7Y">
    <property type="method" value="X-ray"/>
    <property type="resolution" value="1.97 A"/>
    <property type="chains" value="A=1-364"/>
</dbReference>
<dbReference type="PDB" id="5O9W">
    <property type="method" value="X-ray"/>
    <property type="resolution" value="1.85 A"/>
    <property type="chains" value="A=1-364"/>
</dbReference>
<dbReference type="PDBsum" id="5O7Y"/>
<dbReference type="PDBsum" id="5O9W"/>
<dbReference type="SMR" id="D4N500"/>
<dbReference type="STRING" id="3469.A0A4Y7ILV1"/>
<dbReference type="EnsemblPlants" id="RZC49697">
    <property type="protein sequence ID" value="RZC49697"/>
    <property type="gene ID" value="C5167_018133"/>
</dbReference>
<dbReference type="Gramene" id="RZC49697">
    <property type="protein sequence ID" value="RZC49697"/>
    <property type="gene ID" value="C5167_018133"/>
</dbReference>
<dbReference type="KEGG" id="ag:ADD85329"/>
<dbReference type="OMA" id="EFTHSEL"/>
<dbReference type="OrthoDB" id="288590at2759"/>
<dbReference type="SABIO-RK" id="D4N500"/>
<dbReference type="UniPathway" id="UPA00852"/>
<dbReference type="PRO" id="PR:D4N500"/>
<dbReference type="Proteomes" id="UP000316621">
    <property type="component" value="Chromosome 2"/>
</dbReference>
<dbReference type="GO" id="GO:0030782">
    <property type="term" value="F:(S)-tetrahydroprotoberberine N-methyltransferase activity"/>
    <property type="evidence" value="ECO:0007669"/>
    <property type="project" value="RHEA"/>
</dbReference>
<dbReference type="GO" id="GO:0046872">
    <property type="term" value="F:metal ion binding"/>
    <property type="evidence" value="ECO:0007669"/>
    <property type="project" value="UniProtKB-KW"/>
</dbReference>
<dbReference type="GO" id="GO:0102802">
    <property type="term" value="F:thebaine 6-O-demethylase activity"/>
    <property type="evidence" value="ECO:0000314"/>
    <property type="project" value="UniProtKB"/>
</dbReference>
<dbReference type="GO" id="GO:0032259">
    <property type="term" value="P:methylation"/>
    <property type="evidence" value="ECO:0007669"/>
    <property type="project" value="UniProtKB-KW"/>
</dbReference>
<dbReference type="GO" id="GO:0097295">
    <property type="term" value="P:morphine biosynthetic process"/>
    <property type="evidence" value="ECO:0000314"/>
    <property type="project" value="UniProtKB"/>
</dbReference>
<dbReference type="FunFam" id="2.60.120.330:FF:000001">
    <property type="entry name" value="Protein SRG1"/>
    <property type="match status" value="1"/>
</dbReference>
<dbReference type="Gene3D" id="2.60.120.330">
    <property type="entry name" value="B-lactam Antibiotic, Isopenicillin N Synthase, Chain"/>
    <property type="match status" value="1"/>
</dbReference>
<dbReference type="InterPro" id="IPR026992">
    <property type="entry name" value="DIOX_N"/>
</dbReference>
<dbReference type="InterPro" id="IPR044861">
    <property type="entry name" value="IPNS-like_FE2OG_OXY"/>
</dbReference>
<dbReference type="InterPro" id="IPR027443">
    <property type="entry name" value="IPNS-like_sf"/>
</dbReference>
<dbReference type="InterPro" id="IPR005123">
    <property type="entry name" value="Oxoglu/Fe-dep_dioxygenase_dom"/>
</dbReference>
<dbReference type="InterPro" id="IPR050295">
    <property type="entry name" value="Plant_2OG-oxidoreductases"/>
</dbReference>
<dbReference type="PANTHER" id="PTHR47991">
    <property type="entry name" value="OXOGLUTARATE/IRON-DEPENDENT DIOXYGENASE"/>
    <property type="match status" value="1"/>
</dbReference>
<dbReference type="Pfam" id="PF03171">
    <property type="entry name" value="2OG-FeII_Oxy"/>
    <property type="match status" value="1"/>
</dbReference>
<dbReference type="Pfam" id="PF14226">
    <property type="entry name" value="DIOX_N"/>
    <property type="match status" value="1"/>
</dbReference>
<dbReference type="PRINTS" id="PR00682">
    <property type="entry name" value="IPNSYNTHASE"/>
</dbReference>
<dbReference type="SUPFAM" id="SSF51197">
    <property type="entry name" value="Clavaminate synthase-like"/>
    <property type="match status" value="1"/>
</dbReference>
<dbReference type="PROSITE" id="PS51471">
    <property type="entry name" value="FE2OG_OXY"/>
    <property type="match status" value="1"/>
</dbReference>
<proteinExistence type="evidence at protein level"/>
<name>DIOX1_PAPSO</name>
<sequence length="364" mass="40608">MEKAKLMKLGNGMEIPSVQELAKLTLAEIPSRYVCANENLLLPMGASVINDHETIPVIDIENLLSPEPIIGKLELDRLHFACKEWGFFQVVNHGVDASLVDSVKSEIQGFFNLSMDEKTKYEQEDGDVEGFGQGFIESEDQTLDWADIFMMFTLPLHLRKPHLFSKLPVPLRETIESYSSEMKKLSMVLFNKMEKALQVQAAEIKGMSEVFIDGTQAMRMNYYPPCPQPNLAIGLTSHSDFGGLTILLQINEVEGLQIKREGTWIAVKPLPNAFVVNVGDILEIMTNGIYHSVDHRAVVNSTNERLSIATFHDPSLESVIGPISSLITPETPALFKSGSTYGDLVEECKTRKLDGKSFLDSMRI</sequence>
<protein>
    <recommendedName>
        <fullName evidence="8">Thebaine 6-O-demethylase</fullName>
        <ecNumber evidence="2">1.14.11.31</ecNumber>
    </recommendedName>
    <alternativeName>
        <fullName evidence="12">Canadine demethylase</fullName>
        <ecNumber evidence="4">2.1.1.-</ecNumber>
    </alternativeName>
</protein>
<reference key="1">
    <citation type="journal article" date="2010" name="Nat. Chem. Biol.">
        <title>Dioxygenases catalyze the O-demethylation steps of morphine biosynthesis in opium poppy.</title>
        <authorList>
            <person name="Hagel J.M."/>
            <person name="Facchini P.J."/>
        </authorList>
    </citation>
    <scope>NUCLEOTIDE SEQUENCE [MRNA]</scope>
    <scope>FUNCTION</scope>
    <scope>CATALYTIC ACTIVITY</scope>
    <scope>COFACTOR</scope>
    <scope>BIOPHYSICOCHEMICAL PROPERTIES</scope>
    <scope>ACTIVITY REGULATION</scope>
</reference>
<reference key="2">
    <citation type="journal article" date="2018" name="Science">
        <title>The opium poppy genome and morphinan production.</title>
        <authorList>
            <person name="Guo L."/>
            <person name="Winzer T."/>
            <person name="Yang X."/>
            <person name="Li Y."/>
            <person name="Ning Z."/>
            <person name="He Z."/>
            <person name="Teodor R."/>
            <person name="Lu Y."/>
            <person name="Bowser T.A."/>
            <person name="Graham I.A."/>
            <person name="Ye K."/>
        </authorList>
    </citation>
    <scope>NUCLEOTIDE SEQUENCE [LARGE SCALE GENOMIC DNA]</scope>
    <source>
        <strain>cv. HN1</strain>
        <tissue>Leaf</tissue>
    </source>
</reference>
<reference key="3">
    <citation type="journal article" date="2012" name="Plant J.">
        <title>Systematic knockdown of morphine pathway enzymes in opium poppy using virus-induced gene silencing.</title>
        <authorList>
            <person name="Wijekoon C.P."/>
            <person name="Facchini P.J."/>
        </authorList>
    </citation>
    <scope>FUNCTION</scope>
    <scope>DISRUPTION PHENOTYPE</scope>
    <scope>CATALYTIC ACTIVITY</scope>
</reference>
<reference key="4">
    <citation type="journal article" date="2013" name="J. Biol. Chem.">
        <title>Dioxygenases catalyze O-demethylation and O,O-demethylenation with widespread roles in benzylisoquinoline alkaloid metabolism in opium poppy.</title>
        <authorList>
            <person name="Farrow S.C."/>
            <person name="Facchini P.J."/>
        </authorList>
    </citation>
    <scope>FUNCTION</scope>
    <scope>DISRUPTION PHENOTYPE</scope>
    <scope>CATALYTIC ACTIVITY</scope>
    <source>
        <strain>cv. Bea's Choice</strain>
    </source>
</reference>
<reference key="5">
    <citation type="journal article" date="2018" name="J. Biosci.">
        <title>Spatiotemporal oscillations of morphinan alkaloids in opium poppy.</title>
        <authorList>
            <person name="Rezaei M."/>
            <person name="Naghavi M.R."/>
            <person name="Hosseinzadeh A."/>
            <person name="Abasi A."/>
            <person name="Nasiri J."/>
        </authorList>
    </citation>
    <scope>TISSUE SPECIFICITY</scope>
    <scope>DEVELOPMENTAL STAGE</scope>
</reference>
<reference key="6">
    <citation type="journal article" date="2018" name="Plant J.">
        <title>Codeinone reductase isoforms with differential stability, efficiency and product selectivity in opium poppy.</title>
        <authorList>
            <person name="Dastmalchi M."/>
            <person name="Chang L."/>
            <person name="Torres M.A."/>
            <person name="Ng K.K.S."/>
            <person name="Facchini P.J."/>
        </authorList>
    </citation>
    <scope>FUNCTION</scope>
</reference>
<reference key="7">
    <citation type="journal article" date="2018" name="J. Struct. Biol.">
        <title>Crystal structure of thebaine 6-O-demethylase from the morphine biosynthesis pathway.</title>
        <authorList>
            <person name="Kluza A."/>
            <person name="Niedzialkowska E."/>
            <person name="Kurpiewska K."/>
            <person name="Wojdyla Z."/>
            <person name="Quesne M."/>
            <person name="Kot E."/>
            <person name="Porebski P.J."/>
            <person name="Borowski T."/>
        </authorList>
    </citation>
    <scope>X-RAY CRYSTALLOGRAPHY (1.85 ANGSTROMS) IN COMPLEX WITH 2-OXOGLUTARATE</scope>
</reference>
<organism>
    <name type="scientific">Papaver somniferum</name>
    <name type="common">Opium poppy</name>
    <dbReference type="NCBI Taxonomy" id="3469"/>
    <lineage>
        <taxon>Eukaryota</taxon>
        <taxon>Viridiplantae</taxon>
        <taxon>Streptophyta</taxon>
        <taxon>Embryophyta</taxon>
        <taxon>Tracheophyta</taxon>
        <taxon>Spermatophyta</taxon>
        <taxon>Magnoliopsida</taxon>
        <taxon>Ranunculales</taxon>
        <taxon>Papaveraceae</taxon>
        <taxon>Papaveroideae</taxon>
        <taxon>Papaver</taxon>
    </lineage>
</organism>
<comment type="function">
    <text evidence="2 3 4 6 9">Non-heme dioxygenase involved in biosynthesis of morphinan-type benzylisoquinoline and opiate alkaloids natural products (PubMed:20228795, PubMed:29779229). Mediates the conversion of thebaine to neopinone (PubMed:20228795, PubMed:22098111). Also catalyzes, with lower efficiency, the 6-O-demethylation of oripavine to neomorphinone, which is converted spontaneously to morphinone (PubMed:20228795, PubMed:29779229). Supports dealkylation reactions such as O,O-demethylenation in the metabolism of protopine, benzo[c]phenanthridine, and rhoeadine alkaloids; cleaves a methylenedioxy bridge leaving two hydroxyl groups (PubMed:23928311). Catalyzes the O-demethylation of methylenedioxy bridges on protopine alkaloids such as allocryptopine (PubMed:23928311). No activity with (S)-reticuline, salutaridine, papaverine, (S)-corytuberine, (S)-scoulerine, pavine, noscapine or codeine (PubMed:20228795).</text>
</comment>
<comment type="catalytic activity">
    <reaction evidence="2 3 4">
        <text>thebaine + 2-oxoglutarate + O2 = neopinone + formaldehyde + succinate + CO2</text>
        <dbReference type="Rhea" id="RHEA:27477"/>
        <dbReference type="ChEBI" id="CHEBI:15379"/>
        <dbReference type="ChEBI" id="CHEBI:16526"/>
        <dbReference type="ChEBI" id="CHEBI:16810"/>
        <dbReference type="ChEBI" id="CHEBI:16842"/>
        <dbReference type="ChEBI" id="CHEBI:30031"/>
        <dbReference type="ChEBI" id="CHEBI:59950"/>
        <dbReference type="ChEBI" id="CHEBI:59953"/>
        <dbReference type="EC" id="1.14.11.31"/>
    </reaction>
</comment>
<comment type="catalytic activity">
    <reaction evidence="2 4">
        <text>oripavine + 2-oxoglutarate + O2 = neomorphinone + formaldehyde + succinate + CO2</text>
        <dbReference type="Rhea" id="RHEA:75951"/>
        <dbReference type="ChEBI" id="CHEBI:15379"/>
        <dbReference type="ChEBI" id="CHEBI:16526"/>
        <dbReference type="ChEBI" id="CHEBI:16810"/>
        <dbReference type="ChEBI" id="CHEBI:16842"/>
        <dbReference type="ChEBI" id="CHEBI:30031"/>
        <dbReference type="ChEBI" id="CHEBI:194188"/>
        <dbReference type="ChEBI" id="CHEBI:194499"/>
    </reaction>
</comment>
<comment type="catalytic activity">
    <reaction evidence="4">
        <text>(S)-canadine + S-adenosyl-L-methionine = (S)-cis-N-methylcanadine + S-adenosyl-L-homocysteine</text>
        <dbReference type="Rhea" id="RHEA:12805"/>
        <dbReference type="ChEBI" id="CHEBI:16592"/>
        <dbReference type="ChEBI" id="CHEBI:50540"/>
        <dbReference type="ChEBI" id="CHEBI:57856"/>
        <dbReference type="ChEBI" id="CHEBI:59789"/>
    </reaction>
</comment>
<comment type="catalytic activity">
    <reaction evidence="4">
        <text>thebaine + 2-oxoglutarate + O2 = 6-O-demethylthebaine + formaldehyde + succinate + CO2 + H(+)</text>
        <dbReference type="Rhea" id="RHEA:76115"/>
        <dbReference type="ChEBI" id="CHEBI:15378"/>
        <dbReference type="ChEBI" id="CHEBI:15379"/>
        <dbReference type="ChEBI" id="CHEBI:16526"/>
        <dbReference type="ChEBI" id="CHEBI:16810"/>
        <dbReference type="ChEBI" id="CHEBI:16842"/>
        <dbReference type="ChEBI" id="CHEBI:30031"/>
        <dbReference type="ChEBI" id="CHEBI:59953"/>
        <dbReference type="ChEBI" id="CHEBI:194545"/>
    </reaction>
</comment>
<comment type="cofactor">
    <cofactor evidence="2">
        <name>L-ascorbate</name>
        <dbReference type="ChEBI" id="CHEBI:38290"/>
    </cofactor>
</comment>
<comment type="cofactor">
    <cofactor evidence="2">
        <name>Fe cation</name>
        <dbReference type="ChEBI" id="CHEBI:24875"/>
    </cofactor>
    <text evidence="1">Binds 1 Fe(2+) ion per subunit.</text>
</comment>
<comment type="activity regulation">
    <text evidence="2">Moderate substrate inhibition. Not inhibited in vitro by acylcyclohexanediones.</text>
</comment>
<comment type="biophysicochemical properties">
    <kinetics>
        <KM evidence="2">15.4 uM for oripavine</KM>
        <KM evidence="2">20.3 uM for thebaine</KM>
        <KM evidence="2">16.4 uM for 2-oxoglutarate</KM>
    </kinetics>
</comment>
<comment type="pathway">
    <text evidence="10">Alkaloid biosynthesis; morphine biosynthesis.</text>
</comment>
<comment type="tissue specificity">
    <text evidence="7">Mainly expressed in stems and leaves and, to a lower extent, in capsules and roots.</text>
</comment>
<comment type="developmental stage">
    <text evidence="7">In roots, repressed except during flowering (PubMed:29872026). Accumulates in leaves and stems during flowering (PubMed:29872026).</text>
</comment>
<comment type="disruption phenotype">
    <text evidence="3 4">Accumulation of upstream metabolites, such as thebaine, but reduced production of morphine (PubMed:22098111). Lower levels of sanguinarine and 1-benzylisoquinoline laudanosine and, to some extent, of noscapine and papaverine in roots but increased accumulation of the protopine alkaloids cryptopine, protopine and allocryptopine, and of the protoberberines sinactine, N-methystylopine, N-methylcanadine and rhoeadine N-methylporphyroxine (PubMed:23928311).</text>
</comment>
<comment type="miscellaneous">
    <text evidence="11">Neopinone spontaneously rearranges to the more stable codeinone.</text>
</comment>
<comment type="similarity">
    <text evidence="10">Belongs to the iron/ascorbate-dependent oxidoreductase family.</text>
</comment>
<gene>
    <name evidence="8" type="primary">T6ODM</name>
    <name evidence="8" type="synonym">DIOX1</name>
    <name evidence="13" type="ORF">C5167_018133</name>
</gene>
<accession>D4N500</accession>
<accession>A0A4Y7ILV1</accession>
<keyword id="KW-0002">3D-structure</keyword>
<keyword id="KW-0017">Alkaloid metabolism</keyword>
<keyword id="KW-0223">Dioxygenase</keyword>
<keyword id="KW-0408">Iron</keyword>
<keyword id="KW-0479">Metal-binding</keyword>
<keyword id="KW-0489">Methyltransferase</keyword>
<keyword id="KW-0560">Oxidoreductase</keyword>
<keyword id="KW-1185">Reference proteome</keyword>
<keyword id="KW-0808">Transferase</keyword>